<name>Y674_TREPA</name>
<dbReference type="EMBL" id="AE000520">
    <property type="protein sequence ID" value="AAC65650.1"/>
    <property type="molecule type" value="Genomic_DNA"/>
</dbReference>
<dbReference type="PIR" id="B71294">
    <property type="entry name" value="B71294"/>
</dbReference>
<dbReference type="RefSeq" id="WP_010882119.1">
    <property type="nucleotide sequence ID" value="NC_021490.2"/>
</dbReference>
<dbReference type="SMR" id="O83680"/>
<dbReference type="STRING" id="243276.TP_0674"/>
<dbReference type="EnsemblBacteria" id="AAC65650">
    <property type="protein sequence ID" value="AAC65650"/>
    <property type="gene ID" value="TP_0674"/>
</dbReference>
<dbReference type="KEGG" id="tpa:TP_0674"/>
<dbReference type="KEGG" id="tpw:TPANIC_0674"/>
<dbReference type="eggNOG" id="COG2840">
    <property type="taxonomic scope" value="Bacteria"/>
</dbReference>
<dbReference type="HOGENOM" id="CLU_055978_3_0_12"/>
<dbReference type="OrthoDB" id="7165597at2"/>
<dbReference type="Proteomes" id="UP000000811">
    <property type="component" value="Chromosome"/>
</dbReference>
<dbReference type="Gene3D" id="3.30.1370.110">
    <property type="match status" value="1"/>
</dbReference>
<dbReference type="InterPro" id="IPR002625">
    <property type="entry name" value="Smr_dom"/>
</dbReference>
<dbReference type="InterPro" id="IPR036063">
    <property type="entry name" value="Smr_dom_sf"/>
</dbReference>
<dbReference type="PANTHER" id="PTHR35562">
    <property type="entry name" value="DNA ENDONUCLEASE SMRA-RELATED"/>
    <property type="match status" value="1"/>
</dbReference>
<dbReference type="PANTHER" id="PTHR35562:SF2">
    <property type="entry name" value="DNA ENDONUCLEASE SMRA-RELATED"/>
    <property type="match status" value="1"/>
</dbReference>
<dbReference type="Pfam" id="PF01713">
    <property type="entry name" value="Smr"/>
    <property type="match status" value="1"/>
</dbReference>
<dbReference type="SMART" id="SM00463">
    <property type="entry name" value="SMR"/>
    <property type="match status" value="1"/>
</dbReference>
<dbReference type="SUPFAM" id="SSF160443">
    <property type="entry name" value="SMR domain-like"/>
    <property type="match status" value="1"/>
</dbReference>
<dbReference type="PROSITE" id="PS50828">
    <property type="entry name" value="SMR"/>
    <property type="match status" value="1"/>
</dbReference>
<reference key="1">
    <citation type="journal article" date="1998" name="Science">
        <title>Complete genome sequence of Treponema pallidum, the syphilis spirochete.</title>
        <authorList>
            <person name="Fraser C.M."/>
            <person name="Norris S.J."/>
            <person name="Weinstock G.M."/>
            <person name="White O."/>
            <person name="Sutton G.G."/>
            <person name="Dodson R.J."/>
            <person name="Gwinn M.L."/>
            <person name="Hickey E.K."/>
            <person name="Clayton R.A."/>
            <person name="Ketchum K.A."/>
            <person name="Sodergren E."/>
            <person name="Hardham J.M."/>
            <person name="McLeod M.P."/>
            <person name="Salzberg S.L."/>
            <person name="Peterson J.D."/>
            <person name="Khalak H.G."/>
            <person name="Richardson D.L."/>
            <person name="Howell J.K."/>
            <person name="Chidambaram M."/>
            <person name="Utterback T.R."/>
            <person name="McDonald L.A."/>
            <person name="Artiach P."/>
            <person name="Bowman C."/>
            <person name="Cotton M.D."/>
            <person name="Fujii C."/>
            <person name="Garland S.A."/>
            <person name="Hatch B."/>
            <person name="Horst K."/>
            <person name="Roberts K.M."/>
            <person name="Sandusky M."/>
            <person name="Weidman J.F."/>
            <person name="Smith H.O."/>
            <person name="Venter J.C."/>
        </authorList>
    </citation>
    <scope>NUCLEOTIDE SEQUENCE [LARGE SCALE GENOMIC DNA]</scope>
    <source>
        <strain>Nichols</strain>
    </source>
</reference>
<proteinExistence type="predicted"/>
<feature type="chain" id="PRO_0000202299" description="Uncharacterized protein TP_0674">
    <location>
        <begin position="1"/>
        <end position="202"/>
    </location>
</feature>
<feature type="domain" description="Smr" evidence="1">
    <location>
        <begin position="116"/>
        <end position="196"/>
    </location>
</feature>
<evidence type="ECO:0000255" key="1">
    <source>
        <dbReference type="PROSITE-ProRule" id="PRU00321"/>
    </source>
</evidence>
<sequence length="202" mass="22441">MRPLMAGKRRKDILPLEEALRAQSAFARTLRTWEGARRAAVRSATVRARRRGALPSSQAAAAPRVSLMEVALARYGLFDKDAAGACAEYARQRRTFSIHSRRGRRKLRTAVPEARLDLHGMTCSEARSALDSFFAQARERLLQKVEIVHGKGHHSKGGSVLAPSVKRYVQAHPHAGELFHPAERRGGKGTTWVLLKRSVPLH</sequence>
<protein>
    <recommendedName>
        <fullName>Uncharacterized protein TP_0674</fullName>
    </recommendedName>
</protein>
<gene>
    <name type="ordered locus">TP_0674</name>
</gene>
<organism>
    <name type="scientific">Treponema pallidum (strain Nichols)</name>
    <dbReference type="NCBI Taxonomy" id="243276"/>
    <lineage>
        <taxon>Bacteria</taxon>
        <taxon>Pseudomonadati</taxon>
        <taxon>Spirochaetota</taxon>
        <taxon>Spirochaetia</taxon>
        <taxon>Spirochaetales</taxon>
        <taxon>Treponemataceae</taxon>
        <taxon>Treponema</taxon>
    </lineage>
</organism>
<accession>O83680</accession>
<keyword id="KW-1185">Reference proteome</keyword>